<comment type="function">
    <text evidence="1">Catalyzes the radical-mediated insertion of two sulfur atoms into the C-6 and C-8 positions of the octanoyl moiety bound to the lipoyl domains of lipoate-dependent enzymes, thereby converting the octanoylated domains into lipoylated derivatives.</text>
</comment>
<comment type="catalytic activity">
    <reaction evidence="1">
        <text>[[Fe-S] cluster scaffold protein carrying a second [4Fe-4S](2+) cluster] + N(6)-octanoyl-L-lysyl-[protein] + 2 oxidized [2Fe-2S]-[ferredoxin] + 2 S-adenosyl-L-methionine + 4 H(+) = [[Fe-S] cluster scaffold protein] + N(6)-[(R)-dihydrolipoyl]-L-lysyl-[protein] + 4 Fe(3+) + 2 hydrogen sulfide + 2 5'-deoxyadenosine + 2 L-methionine + 2 reduced [2Fe-2S]-[ferredoxin]</text>
        <dbReference type="Rhea" id="RHEA:16585"/>
        <dbReference type="Rhea" id="RHEA-COMP:9928"/>
        <dbReference type="Rhea" id="RHEA-COMP:10000"/>
        <dbReference type="Rhea" id="RHEA-COMP:10001"/>
        <dbReference type="Rhea" id="RHEA-COMP:10475"/>
        <dbReference type="Rhea" id="RHEA-COMP:14568"/>
        <dbReference type="Rhea" id="RHEA-COMP:14569"/>
        <dbReference type="ChEBI" id="CHEBI:15378"/>
        <dbReference type="ChEBI" id="CHEBI:17319"/>
        <dbReference type="ChEBI" id="CHEBI:29034"/>
        <dbReference type="ChEBI" id="CHEBI:29919"/>
        <dbReference type="ChEBI" id="CHEBI:33722"/>
        <dbReference type="ChEBI" id="CHEBI:33737"/>
        <dbReference type="ChEBI" id="CHEBI:33738"/>
        <dbReference type="ChEBI" id="CHEBI:57844"/>
        <dbReference type="ChEBI" id="CHEBI:59789"/>
        <dbReference type="ChEBI" id="CHEBI:78809"/>
        <dbReference type="ChEBI" id="CHEBI:83100"/>
        <dbReference type="EC" id="2.8.1.8"/>
    </reaction>
</comment>
<comment type="cofactor">
    <cofactor evidence="1">
        <name>[4Fe-4S] cluster</name>
        <dbReference type="ChEBI" id="CHEBI:49883"/>
    </cofactor>
    <text evidence="1">Binds 2 [4Fe-4S] clusters per subunit. One cluster is coordinated with 3 cysteines and an exchangeable S-adenosyl-L-methionine.</text>
</comment>
<comment type="pathway">
    <text evidence="1">Protein modification; protein lipoylation via endogenous pathway; protein N(6)-(lipoyl)lysine from octanoyl-[acyl-carrier-protein]: step 2/2.</text>
</comment>
<comment type="subcellular location">
    <subcellularLocation>
        <location evidence="1">Cytoplasm</location>
    </subcellularLocation>
</comment>
<comment type="similarity">
    <text evidence="1">Belongs to the radical SAM superfamily. Lipoyl synthase family.</text>
</comment>
<evidence type="ECO:0000255" key="1">
    <source>
        <dbReference type="HAMAP-Rule" id="MF_00206"/>
    </source>
</evidence>
<evidence type="ECO:0000255" key="2">
    <source>
        <dbReference type="PROSITE-ProRule" id="PRU01266"/>
    </source>
</evidence>
<organism>
    <name type="scientific">Polaromonas naphthalenivorans (strain CJ2)</name>
    <dbReference type="NCBI Taxonomy" id="365044"/>
    <lineage>
        <taxon>Bacteria</taxon>
        <taxon>Pseudomonadati</taxon>
        <taxon>Pseudomonadota</taxon>
        <taxon>Betaproteobacteria</taxon>
        <taxon>Burkholderiales</taxon>
        <taxon>Comamonadaceae</taxon>
        <taxon>Polaromonas</taxon>
    </lineage>
</organism>
<accession>A1VIT9</accession>
<reference key="1">
    <citation type="journal article" date="2009" name="Environ. Microbiol.">
        <title>The genome of Polaromonas naphthalenivorans strain CJ2, isolated from coal tar-contaminated sediment, reveals physiological and metabolic versatility and evolution through extensive horizontal gene transfer.</title>
        <authorList>
            <person name="Yagi J.M."/>
            <person name="Sims D."/>
            <person name="Brettin T."/>
            <person name="Bruce D."/>
            <person name="Madsen E.L."/>
        </authorList>
    </citation>
    <scope>NUCLEOTIDE SEQUENCE [LARGE SCALE GENOMIC DNA]</scope>
    <source>
        <strain>CJ2</strain>
    </source>
</reference>
<sequence>MSTPEVVREVQSLETYNPLAKQKAAAKLSRIPVKVVQGEILKKPDWIRVKAGSPSTRFYEIKQILRENKLNTVCEEASCPNIGECFGKGTATFMIMGDKCTRRCPFCDVGHGRPDPLDADEPLNLARTIAALKLKYVVITSVDRDDLRDGGSGHFVECIQRIRELSPGTTIEVLVPDFRGRDDRALEILKTSPPDVMNHNLETAPRLYKEARPGSDYQFSLNLLKKFKALHPDVPTKSGIMVGLGETDEEILQVMQDMRDHGINMLTIGQYLAPSTSHLPVRRYVHPDTFKMFEEKAYEMGFSHAAVGAMVRSSYHADQQAHAAGVSDKPAE</sequence>
<gene>
    <name evidence="1" type="primary">lipA</name>
    <name type="ordered locus">Pnap_0242</name>
</gene>
<proteinExistence type="inferred from homology"/>
<feature type="chain" id="PRO_0000325285" description="Lipoyl synthase">
    <location>
        <begin position="1"/>
        <end position="332"/>
    </location>
</feature>
<feature type="domain" description="Radical SAM core" evidence="2">
    <location>
        <begin position="85"/>
        <end position="303"/>
    </location>
</feature>
<feature type="binding site" evidence="1">
    <location>
        <position position="74"/>
    </location>
    <ligand>
        <name>[4Fe-4S] cluster</name>
        <dbReference type="ChEBI" id="CHEBI:49883"/>
        <label>1</label>
    </ligand>
</feature>
<feature type="binding site" evidence="1">
    <location>
        <position position="79"/>
    </location>
    <ligand>
        <name>[4Fe-4S] cluster</name>
        <dbReference type="ChEBI" id="CHEBI:49883"/>
        <label>1</label>
    </ligand>
</feature>
<feature type="binding site" evidence="1">
    <location>
        <position position="85"/>
    </location>
    <ligand>
        <name>[4Fe-4S] cluster</name>
        <dbReference type="ChEBI" id="CHEBI:49883"/>
        <label>1</label>
    </ligand>
</feature>
<feature type="binding site" evidence="1">
    <location>
        <position position="100"/>
    </location>
    <ligand>
        <name>[4Fe-4S] cluster</name>
        <dbReference type="ChEBI" id="CHEBI:49883"/>
        <label>2</label>
        <note>4Fe-4S-S-AdoMet</note>
    </ligand>
</feature>
<feature type="binding site" evidence="1">
    <location>
        <position position="104"/>
    </location>
    <ligand>
        <name>[4Fe-4S] cluster</name>
        <dbReference type="ChEBI" id="CHEBI:49883"/>
        <label>2</label>
        <note>4Fe-4S-S-AdoMet</note>
    </ligand>
</feature>
<feature type="binding site" evidence="1">
    <location>
        <position position="107"/>
    </location>
    <ligand>
        <name>[4Fe-4S] cluster</name>
        <dbReference type="ChEBI" id="CHEBI:49883"/>
        <label>2</label>
        <note>4Fe-4S-S-AdoMet</note>
    </ligand>
</feature>
<feature type="binding site" evidence="1">
    <location>
        <position position="314"/>
    </location>
    <ligand>
        <name>[4Fe-4S] cluster</name>
        <dbReference type="ChEBI" id="CHEBI:49883"/>
        <label>1</label>
    </ligand>
</feature>
<protein>
    <recommendedName>
        <fullName evidence="1">Lipoyl synthase</fullName>
        <ecNumber evidence="1">2.8.1.8</ecNumber>
    </recommendedName>
    <alternativeName>
        <fullName evidence="1">Lip-syn</fullName>
        <shortName evidence="1">LS</shortName>
    </alternativeName>
    <alternativeName>
        <fullName evidence="1">Lipoate synthase</fullName>
    </alternativeName>
    <alternativeName>
        <fullName evidence="1">Lipoic acid synthase</fullName>
    </alternativeName>
    <alternativeName>
        <fullName evidence="1">Sulfur insertion protein LipA</fullName>
    </alternativeName>
</protein>
<name>LIPA_POLNA</name>
<dbReference type="EC" id="2.8.1.8" evidence="1"/>
<dbReference type="EMBL" id="CP000529">
    <property type="protein sequence ID" value="ABM35567.1"/>
    <property type="molecule type" value="Genomic_DNA"/>
</dbReference>
<dbReference type="RefSeq" id="WP_011799675.1">
    <property type="nucleotide sequence ID" value="NC_008781.1"/>
</dbReference>
<dbReference type="SMR" id="A1VIT9"/>
<dbReference type="STRING" id="365044.Pnap_0242"/>
<dbReference type="KEGG" id="pna:Pnap_0242"/>
<dbReference type="eggNOG" id="COG0320">
    <property type="taxonomic scope" value="Bacteria"/>
</dbReference>
<dbReference type="HOGENOM" id="CLU_033144_2_1_4"/>
<dbReference type="OrthoDB" id="9787898at2"/>
<dbReference type="UniPathway" id="UPA00538">
    <property type="reaction ID" value="UER00593"/>
</dbReference>
<dbReference type="Proteomes" id="UP000000644">
    <property type="component" value="Chromosome"/>
</dbReference>
<dbReference type="GO" id="GO:0005737">
    <property type="term" value="C:cytoplasm"/>
    <property type="evidence" value="ECO:0007669"/>
    <property type="project" value="UniProtKB-SubCell"/>
</dbReference>
<dbReference type="GO" id="GO:0051539">
    <property type="term" value="F:4 iron, 4 sulfur cluster binding"/>
    <property type="evidence" value="ECO:0007669"/>
    <property type="project" value="UniProtKB-UniRule"/>
</dbReference>
<dbReference type="GO" id="GO:0016992">
    <property type="term" value="F:lipoate synthase activity"/>
    <property type="evidence" value="ECO:0007669"/>
    <property type="project" value="UniProtKB-UniRule"/>
</dbReference>
<dbReference type="GO" id="GO:0046872">
    <property type="term" value="F:metal ion binding"/>
    <property type="evidence" value="ECO:0007669"/>
    <property type="project" value="UniProtKB-KW"/>
</dbReference>
<dbReference type="CDD" id="cd01335">
    <property type="entry name" value="Radical_SAM"/>
    <property type="match status" value="1"/>
</dbReference>
<dbReference type="FunFam" id="3.20.20.70:FF:000040">
    <property type="entry name" value="Lipoyl synthase"/>
    <property type="match status" value="1"/>
</dbReference>
<dbReference type="Gene3D" id="3.20.20.70">
    <property type="entry name" value="Aldolase class I"/>
    <property type="match status" value="1"/>
</dbReference>
<dbReference type="HAMAP" id="MF_00206">
    <property type="entry name" value="Lipoyl_synth"/>
    <property type="match status" value="1"/>
</dbReference>
<dbReference type="InterPro" id="IPR013785">
    <property type="entry name" value="Aldolase_TIM"/>
</dbReference>
<dbReference type="InterPro" id="IPR006638">
    <property type="entry name" value="Elp3/MiaA/NifB-like_rSAM"/>
</dbReference>
<dbReference type="InterPro" id="IPR003698">
    <property type="entry name" value="Lipoyl_synth"/>
</dbReference>
<dbReference type="InterPro" id="IPR007197">
    <property type="entry name" value="rSAM"/>
</dbReference>
<dbReference type="NCBIfam" id="TIGR00510">
    <property type="entry name" value="lipA"/>
    <property type="match status" value="1"/>
</dbReference>
<dbReference type="NCBIfam" id="NF004019">
    <property type="entry name" value="PRK05481.1"/>
    <property type="match status" value="1"/>
</dbReference>
<dbReference type="NCBIfam" id="NF009544">
    <property type="entry name" value="PRK12928.1"/>
    <property type="match status" value="1"/>
</dbReference>
<dbReference type="PANTHER" id="PTHR10949">
    <property type="entry name" value="LIPOYL SYNTHASE"/>
    <property type="match status" value="1"/>
</dbReference>
<dbReference type="PANTHER" id="PTHR10949:SF0">
    <property type="entry name" value="LIPOYL SYNTHASE, MITOCHONDRIAL"/>
    <property type="match status" value="1"/>
</dbReference>
<dbReference type="Pfam" id="PF04055">
    <property type="entry name" value="Radical_SAM"/>
    <property type="match status" value="1"/>
</dbReference>
<dbReference type="PIRSF" id="PIRSF005963">
    <property type="entry name" value="Lipoyl_synth"/>
    <property type="match status" value="1"/>
</dbReference>
<dbReference type="SFLD" id="SFLDF00271">
    <property type="entry name" value="lipoyl_synthase"/>
    <property type="match status" value="1"/>
</dbReference>
<dbReference type="SFLD" id="SFLDS00029">
    <property type="entry name" value="Radical_SAM"/>
    <property type="match status" value="1"/>
</dbReference>
<dbReference type="SMART" id="SM00729">
    <property type="entry name" value="Elp3"/>
    <property type="match status" value="1"/>
</dbReference>
<dbReference type="SUPFAM" id="SSF102114">
    <property type="entry name" value="Radical SAM enzymes"/>
    <property type="match status" value="1"/>
</dbReference>
<dbReference type="PROSITE" id="PS51918">
    <property type="entry name" value="RADICAL_SAM"/>
    <property type="match status" value="1"/>
</dbReference>
<keyword id="KW-0004">4Fe-4S</keyword>
<keyword id="KW-0963">Cytoplasm</keyword>
<keyword id="KW-0408">Iron</keyword>
<keyword id="KW-0411">Iron-sulfur</keyword>
<keyword id="KW-0479">Metal-binding</keyword>
<keyword id="KW-1185">Reference proteome</keyword>
<keyword id="KW-0949">S-adenosyl-L-methionine</keyword>
<keyword id="KW-0808">Transferase</keyword>